<proteinExistence type="inferred from homology"/>
<gene>
    <name evidence="1" type="primary">rutB</name>
    <name type="ordered locus">ECO111_1200</name>
</gene>
<comment type="function">
    <text evidence="1">Hydrolyzes ureidoacrylate to form aminoacrylate and carbamate. The carbamate hydrolyzes spontaneously, thereby releasing one of the nitrogen atoms of the pyrimidine ring as ammonia and one of its carbon atoms as CO2.</text>
</comment>
<comment type="catalytic activity">
    <reaction evidence="1">
        <text>(Z)-3-ureidoacrylate + H2O + H(+) = (Z)-3-aminoacrylate + NH4(+) + CO2</text>
        <dbReference type="Rhea" id="RHEA:42624"/>
        <dbReference type="ChEBI" id="CHEBI:15377"/>
        <dbReference type="ChEBI" id="CHEBI:15378"/>
        <dbReference type="ChEBI" id="CHEBI:16526"/>
        <dbReference type="ChEBI" id="CHEBI:28938"/>
        <dbReference type="ChEBI" id="CHEBI:59891"/>
        <dbReference type="ChEBI" id="CHEBI:59894"/>
        <dbReference type="EC" id="3.5.1.110"/>
    </reaction>
</comment>
<comment type="catalytic activity">
    <reaction evidence="1">
        <text>(Z)-3-ureidoacrylate + H2O = (Z)-3-aminoacrylate + carbamate + H(+)</text>
        <dbReference type="Rhea" id="RHEA:31603"/>
        <dbReference type="ChEBI" id="CHEBI:13941"/>
        <dbReference type="ChEBI" id="CHEBI:15377"/>
        <dbReference type="ChEBI" id="CHEBI:15378"/>
        <dbReference type="ChEBI" id="CHEBI:59891"/>
        <dbReference type="ChEBI" id="CHEBI:59894"/>
    </reaction>
</comment>
<comment type="catalytic activity">
    <reaction evidence="1">
        <text>(Z)-2-methylureidoacrylate + H2O + H(+) = (Z)-2-methylaminoacrylate + NH4(+) + CO2</text>
        <dbReference type="Rhea" id="RHEA:42620"/>
        <dbReference type="ChEBI" id="CHEBI:15377"/>
        <dbReference type="ChEBI" id="CHEBI:15378"/>
        <dbReference type="ChEBI" id="CHEBI:16526"/>
        <dbReference type="ChEBI" id="CHEBI:28938"/>
        <dbReference type="ChEBI" id="CHEBI:143783"/>
        <dbReference type="ChEBI" id="CHEBI:145735"/>
        <dbReference type="EC" id="3.5.1.110"/>
    </reaction>
</comment>
<comment type="induction">
    <text evidence="1">Up-regulated by the nitrogen regulatory protein C (NtrC also called GlnG) and repressed by RutR.</text>
</comment>
<comment type="similarity">
    <text evidence="1">Belongs to the isochorismatase family. RutB subfamily.</text>
</comment>
<accession>C8UMM7</accession>
<feature type="chain" id="PRO_0000402668" description="Ureidoacrylate amidohydrolase RutB">
    <location>
        <begin position="1"/>
        <end position="230"/>
    </location>
</feature>
<feature type="active site" description="Proton acceptor" evidence="1">
    <location>
        <position position="24"/>
    </location>
</feature>
<feature type="active site" evidence="1">
    <location>
        <position position="133"/>
    </location>
</feature>
<feature type="active site" description="Nucleophile" evidence="1">
    <location>
        <position position="166"/>
    </location>
</feature>
<evidence type="ECO:0000255" key="1">
    <source>
        <dbReference type="HAMAP-Rule" id="MF_00830"/>
    </source>
</evidence>
<protein>
    <recommendedName>
        <fullName evidence="1">Ureidoacrylate amidohydrolase RutB</fullName>
        <ecNumber evidence="1">3.5.1.110</ecNumber>
    </recommendedName>
</protein>
<sequence>MTTLTARPEAITFDPQQSALIVVDMQNAYATPGGYLDLAGFDVSTTRPVIANIQTAVTAARAAGMLIIWFQNGWDEQYVEAGGPGSPNFHKSNALKTMRKQPQLQGKLLAKGSWDYQLVDELVPQPGDIVLPKPRYSGFFNTPLDSILRSRGIRHLVFTGIATNVCVESTLRDGFFLEYFGVVLEDATHQAGPEFAQKAALFNIETFFGWVSDVETFCDALSPTSFARIA</sequence>
<dbReference type="EC" id="3.5.1.110" evidence="1"/>
<dbReference type="EMBL" id="AP010960">
    <property type="protein sequence ID" value="BAI35147.1"/>
    <property type="molecule type" value="Genomic_DNA"/>
</dbReference>
<dbReference type="RefSeq" id="WP_001307708.1">
    <property type="nucleotide sequence ID" value="NC_013364.1"/>
</dbReference>
<dbReference type="SMR" id="C8UMM7"/>
<dbReference type="GeneID" id="93776399"/>
<dbReference type="KEGG" id="eoi:ECO111_1200"/>
<dbReference type="HOGENOM" id="CLU_068979_8_0_6"/>
<dbReference type="GO" id="GO:0016811">
    <property type="term" value="F:hydrolase activity, acting on carbon-nitrogen (but not peptide) bonds, in linear amides"/>
    <property type="evidence" value="ECO:0007669"/>
    <property type="project" value="UniProtKB-UniRule"/>
</dbReference>
<dbReference type="GO" id="GO:0019740">
    <property type="term" value="P:nitrogen utilization"/>
    <property type="evidence" value="ECO:0007669"/>
    <property type="project" value="UniProtKB-UniRule"/>
</dbReference>
<dbReference type="GO" id="GO:0006212">
    <property type="term" value="P:uracil catabolic process"/>
    <property type="evidence" value="ECO:0007669"/>
    <property type="project" value="UniProtKB-UniRule"/>
</dbReference>
<dbReference type="CDD" id="cd00431">
    <property type="entry name" value="cysteine_hydrolases"/>
    <property type="match status" value="1"/>
</dbReference>
<dbReference type="FunFam" id="3.40.50.850:FF:000004">
    <property type="entry name" value="Peroxyureidoacrylate/ureidoacrylate amidohydrolase RutB"/>
    <property type="match status" value="1"/>
</dbReference>
<dbReference type="Gene3D" id="3.40.50.850">
    <property type="entry name" value="Isochorismatase-like"/>
    <property type="match status" value="1"/>
</dbReference>
<dbReference type="HAMAP" id="MF_00830">
    <property type="entry name" value="RutB"/>
    <property type="match status" value="1"/>
</dbReference>
<dbReference type="InterPro" id="IPR000868">
    <property type="entry name" value="Isochorismatase-like_dom"/>
</dbReference>
<dbReference type="InterPro" id="IPR050272">
    <property type="entry name" value="Isochorismatase-like_hydrls"/>
</dbReference>
<dbReference type="InterPro" id="IPR036380">
    <property type="entry name" value="Isochorismatase-like_sf"/>
</dbReference>
<dbReference type="InterPro" id="IPR019916">
    <property type="entry name" value="RutB"/>
</dbReference>
<dbReference type="NCBIfam" id="TIGR03614">
    <property type="entry name" value="RutB"/>
    <property type="match status" value="1"/>
</dbReference>
<dbReference type="PANTHER" id="PTHR43540:SF6">
    <property type="entry name" value="ISOCHORISMATASE-LIKE DOMAIN-CONTAINING PROTEIN"/>
    <property type="match status" value="1"/>
</dbReference>
<dbReference type="PANTHER" id="PTHR43540">
    <property type="entry name" value="PEROXYUREIDOACRYLATE/UREIDOACRYLATE AMIDOHYDROLASE-RELATED"/>
    <property type="match status" value="1"/>
</dbReference>
<dbReference type="Pfam" id="PF00857">
    <property type="entry name" value="Isochorismatase"/>
    <property type="match status" value="1"/>
</dbReference>
<dbReference type="SUPFAM" id="SSF52499">
    <property type="entry name" value="Isochorismatase-like hydrolases"/>
    <property type="match status" value="1"/>
</dbReference>
<organism>
    <name type="scientific">Escherichia coli O111:H- (strain 11128 / EHEC)</name>
    <dbReference type="NCBI Taxonomy" id="585396"/>
    <lineage>
        <taxon>Bacteria</taxon>
        <taxon>Pseudomonadati</taxon>
        <taxon>Pseudomonadota</taxon>
        <taxon>Gammaproteobacteria</taxon>
        <taxon>Enterobacterales</taxon>
        <taxon>Enterobacteriaceae</taxon>
        <taxon>Escherichia</taxon>
    </lineage>
</organism>
<reference key="1">
    <citation type="journal article" date="2009" name="Proc. Natl. Acad. Sci. U.S.A.">
        <title>Comparative genomics reveal the mechanism of the parallel evolution of O157 and non-O157 enterohemorrhagic Escherichia coli.</title>
        <authorList>
            <person name="Ogura Y."/>
            <person name="Ooka T."/>
            <person name="Iguchi A."/>
            <person name="Toh H."/>
            <person name="Asadulghani M."/>
            <person name="Oshima K."/>
            <person name="Kodama T."/>
            <person name="Abe H."/>
            <person name="Nakayama K."/>
            <person name="Kurokawa K."/>
            <person name="Tobe T."/>
            <person name="Hattori M."/>
            <person name="Hayashi T."/>
        </authorList>
    </citation>
    <scope>NUCLEOTIDE SEQUENCE [LARGE SCALE GENOMIC DNA]</scope>
    <source>
        <strain>11128 / EHEC</strain>
    </source>
</reference>
<keyword id="KW-0378">Hydrolase</keyword>
<name>RUTB_ECO1A</name>